<comment type="function">
    <text evidence="2 6 7">Plays an inhibitory role on IL13 signaling by binding to IL13RA1. Involved in suppression of IL13-induced STAT6 phosphorylation, transcriptional activity and DNA-binding. Recruits TRAF3 and DISC1 to the microtubules (By similarity). Involved in epithelial morphogenesis and in the regulation of microtubule cytoskeleton organization. Is a negative regulator of microtubule stability, acting through the control of MAP4 levels (PubMed:26487268). Involved in ciliogenesis (PubMed:21945076).</text>
</comment>
<comment type="subunit">
    <text evidence="1 5 7">Interacts with IL13RA1. Binds to microtubules, TRAF3 and DISC1 (By similarity). Component of the IFT complex B, at least composed of IFT20, IFT22, IFT25, IFT27, IFT46, IFT52, TRAF3IP1/IFT54, IFT57, IFT74, IFT80, IFT81, and IFT88. Interacts with IFT88. Interacts with MAP4 (PubMed:26487268).</text>
</comment>
<comment type="subcellular location">
    <subcellularLocation>
        <location evidence="2">Cytoplasm</location>
        <location evidence="2">Cytoskeleton</location>
    </subcellularLocation>
    <subcellularLocation>
        <location evidence="5">Cell projection</location>
        <location evidence="5">Cilium</location>
    </subcellularLocation>
    <subcellularLocation>
        <location evidence="6">Cytoplasm</location>
        <location evidence="6">Cytoskeleton</location>
        <location evidence="6">Cilium axoneme</location>
    </subcellularLocation>
    <subcellularLocation>
        <location evidence="6">Cytoplasm</location>
        <location evidence="6">Cytoskeleton</location>
        <location evidence="6">Cilium basal body</location>
    </subcellularLocation>
    <text evidence="2">Microtubules. In the cilium, it is observed at the ciliary base, ciliary transition zone and ciliary tip.</text>
</comment>
<comment type="disruption phenotype">
    <text evidence="6">Homozygous mutant mice are not viable and have neural development defects, abnormal neural tube patterning, polydactyly, cardiac edema, and variable microphthalmia. Mutant cells have a marked reduction in the number of cilia.</text>
</comment>
<comment type="similarity">
    <text evidence="8">Belongs to the TRAF3IP1 family.</text>
</comment>
<comment type="sequence caution" evidence="8">
    <conflict type="miscellaneous discrepancy">
        <sequence resource="EMBL-CDS" id="AAH46538"/>
    </conflict>
    <text>Contaminating sequence. Potential poly-A sequence.</text>
</comment>
<protein>
    <recommendedName>
        <fullName>TRAF3-interacting protein 1</fullName>
    </recommendedName>
    <alternativeName>
        <fullName>Intraflagellar transport protein 54 homolog</fullName>
    </alternativeName>
    <alternativeName>
        <fullName>Microtubule-interacting protein associated with TRAF3</fullName>
        <shortName>MIP-T3</shortName>
    </alternativeName>
</protein>
<evidence type="ECO:0000250" key="1"/>
<evidence type="ECO:0000250" key="2">
    <source>
        <dbReference type="UniProtKB" id="Q8TDR0"/>
    </source>
</evidence>
<evidence type="ECO:0000255" key="3"/>
<evidence type="ECO:0000256" key="4">
    <source>
        <dbReference type="SAM" id="MobiDB-lite"/>
    </source>
</evidence>
<evidence type="ECO:0000269" key="5">
    <source>
    </source>
</evidence>
<evidence type="ECO:0000269" key="6">
    <source>
    </source>
</evidence>
<evidence type="ECO:0000269" key="7">
    <source>
    </source>
</evidence>
<evidence type="ECO:0000305" key="8"/>
<evidence type="ECO:0007744" key="9">
    <source>
    </source>
</evidence>
<evidence type="ECO:0007829" key="10">
    <source>
        <dbReference type="PDB" id="5FMU"/>
    </source>
</evidence>
<organism>
    <name type="scientific">Mus musculus</name>
    <name type="common">Mouse</name>
    <dbReference type="NCBI Taxonomy" id="10090"/>
    <lineage>
        <taxon>Eukaryota</taxon>
        <taxon>Metazoa</taxon>
        <taxon>Chordata</taxon>
        <taxon>Craniata</taxon>
        <taxon>Vertebrata</taxon>
        <taxon>Euteleostomi</taxon>
        <taxon>Mammalia</taxon>
        <taxon>Eutheria</taxon>
        <taxon>Euarchontoglires</taxon>
        <taxon>Glires</taxon>
        <taxon>Rodentia</taxon>
        <taxon>Myomorpha</taxon>
        <taxon>Muroidea</taxon>
        <taxon>Muridae</taxon>
        <taxon>Murinae</taxon>
        <taxon>Mus</taxon>
        <taxon>Mus</taxon>
    </lineage>
</organism>
<reference key="1">
    <citation type="submission" date="2004-04" db="EMBL/GenBank/DDBJ databases">
        <title>Mus musculus microtubule-interacting protein that associates with TRAF3.</title>
        <authorList>
            <person name="Ma B."/>
            <person name="He C."/>
            <person name="Lee C."/>
            <person name="Elias J.A."/>
        </authorList>
    </citation>
    <scope>NUCLEOTIDE SEQUENCE [MRNA]</scope>
    <source>
        <strain>C57BL/6J</strain>
    </source>
</reference>
<reference key="2">
    <citation type="journal article" date="2004" name="Genome Res.">
        <title>The status, quality, and expansion of the NIH full-length cDNA project: the Mammalian Gene Collection (MGC).</title>
        <authorList>
            <consortium name="The MGC Project Team"/>
        </authorList>
    </citation>
    <scope>NUCLEOTIDE SEQUENCE [LARGE SCALE MRNA]</scope>
    <source>
        <strain>NMRI</strain>
        <tissue>Mammary tumor</tissue>
    </source>
</reference>
<reference key="3">
    <citation type="journal article" date="2005" name="Science">
        <title>The transcriptional landscape of the mammalian genome.</title>
        <authorList>
            <person name="Carninci P."/>
            <person name="Kasukawa T."/>
            <person name="Katayama S."/>
            <person name="Gough J."/>
            <person name="Frith M.C."/>
            <person name="Maeda N."/>
            <person name="Oyama R."/>
            <person name="Ravasi T."/>
            <person name="Lenhard B."/>
            <person name="Wells C."/>
            <person name="Kodzius R."/>
            <person name="Shimokawa K."/>
            <person name="Bajic V.B."/>
            <person name="Brenner S.E."/>
            <person name="Batalov S."/>
            <person name="Forrest A.R."/>
            <person name="Zavolan M."/>
            <person name="Davis M.J."/>
            <person name="Wilming L.G."/>
            <person name="Aidinis V."/>
            <person name="Allen J.E."/>
            <person name="Ambesi-Impiombato A."/>
            <person name="Apweiler R."/>
            <person name="Aturaliya R.N."/>
            <person name="Bailey T.L."/>
            <person name="Bansal M."/>
            <person name="Baxter L."/>
            <person name="Beisel K.W."/>
            <person name="Bersano T."/>
            <person name="Bono H."/>
            <person name="Chalk A.M."/>
            <person name="Chiu K.P."/>
            <person name="Choudhary V."/>
            <person name="Christoffels A."/>
            <person name="Clutterbuck D.R."/>
            <person name="Crowe M.L."/>
            <person name="Dalla E."/>
            <person name="Dalrymple B.P."/>
            <person name="de Bono B."/>
            <person name="Della Gatta G."/>
            <person name="di Bernardo D."/>
            <person name="Down T."/>
            <person name="Engstrom P."/>
            <person name="Fagiolini M."/>
            <person name="Faulkner G."/>
            <person name="Fletcher C.F."/>
            <person name="Fukushima T."/>
            <person name="Furuno M."/>
            <person name="Futaki S."/>
            <person name="Gariboldi M."/>
            <person name="Georgii-Hemming P."/>
            <person name="Gingeras T.R."/>
            <person name="Gojobori T."/>
            <person name="Green R.E."/>
            <person name="Gustincich S."/>
            <person name="Harbers M."/>
            <person name="Hayashi Y."/>
            <person name="Hensch T.K."/>
            <person name="Hirokawa N."/>
            <person name="Hill D."/>
            <person name="Huminiecki L."/>
            <person name="Iacono M."/>
            <person name="Ikeo K."/>
            <person name="Iwama A."/>
            <person name="Ishikawa T."/>
            <person name="Jakt M."/>
            <person name="Kanapin A."/>
            <person name="Katoh M."/>
            <person name="Kawasawa Y."/>
            <person name="Kelso J."/>
            <person name="Kitamura H."/>
            <person name="Kitano H."/>
            <person name="Kollias G."/>
            <person name="Krishnan S.P."/>
            <person name="Kruger A."/>
            <person name="Kummerfeld S.K."/>
            <person name="Kurochkin I.V."/>
            <person name="Lareau L.F."/>
            <person name="Lazarevic D."/>
            <person name="Lipovich L."/>
            <person name="Liu J."/>
            <person name="Liuni S."/>
            <person name="McWilliam S."/>
            <person name="Madan Babu M."/>
            <person name="Madera M."/>
            <person name="Marchionni L."/>
            <person name="Matsuda H."/>
            <person name="Matsuzawa S."/>
            <person name="Miki H."/>
            <person name="Mignone F."/>
            <person name="Miyake S."/>
            <person name="Morris K."/>
            <person name="Mottagui-Tabar S."/>
            <person name="Mulder N."/>
            <person name="Nakano N."/>
            <person name="Nakauchi H."/>
            <person name="Ng P."/>
            <person name="Nilsson R."/>
            <person name="Nishiguchi S."/>
            <person name="Nishikawa S."/>
            <person name="Nori F."/>
            <person name="Ohara O."/>
            <person name="Okazaki Y."/>
            <person name="Orlando V."/>
            <person name="Pang K.C."/>
            <person name="Pavan W.J."/>
            <person name="Pavesi G."/>
            <person name="Pesole G."/>
            <person name="Petrovsky N."/>
            <person name="Piazza S."/>
            <person name="Reed J."/>
            <person name="Reid J.F."/>
            <person name="Ring B.Z."/>
            <person name="Ringwald M."/>
            <person name="Rost B."/>
            <person name="Ruan Y."/>
            <person name="Salzberg S.L."/>
            <person name="Sandelin A."/>
            <person name="Schneider C."/>
            <person name="Schoenbach C."/>
            <person name="Sekiguchi K."/>
            <person name="Semple C.A."/>
            <person name="Seno S."/>
            <person name="Sessa L."/>
            <person name="Sheng Y."/>
            <person name="Shibata Y."/>
            <person name="Shimada H."/>
            <person name="Shimada K."/>
            <person name="Silva D."/>
            <person name="Sinclair B."/>
            <person name="Sperling S."/>
            <person name="Stupka E."/>
            <person name="Sugiura K."/>
            <person name="Sultana R."/>
            <person name="Takenaka Y."/>
            <person name="Taki K."/>
            <person name="Tammoja K."/>
            <person name="Tan S.L."/>
            <person name="Tang S."/>
            <person name="Taylor M.S."/>
            <person name="Tegner J."/>
            <person name="Teichmann S.A."/>
            <person name="Ueda H.R."/>
            <person name="van Nimwegen E."/>
            <person name="Verardo R."/>
            <person name="Wei C.L."/>
            <person name="Yagi K."/>
            <person name="Yamanishi H."/>
            <person name="Zabarovsky E."/>
            <person name="Zhu S."/>
            <person name="Zimmer A."/>
            <person name="Hide W."/>
            <person name="Bult C."/>
            <person name="Grimmond S.M."/>
            <person name="Teasdale R.D."/>
            <person name="Liu E.T."/>
            <person name="Brusic V."/>
            <person name="Quackenbush J."/>
            <person name="Wahlestedt C."/>
            <person name="Mattick J.S."/>
            <person name="Hume D.A."/>
            <person name="Kai C."/>
            <person name="Sasaki D."/>
            <person name="Tomaru Y."/>
            <person name="Fukuda S."/>
            <person name="Kanamori-Katayama M."/>
            <person name="Suzuki M."/>
            <person name="Aoki J."/>
            <person name="Arakawa T."/>
            <person name="Iida J."/>
            <person name="Imamura K."/>
            <person name="Itoh M."/>
            <person name="Kato T."/>
            <person name="Kawaji H."/>
            <person name="Kawagashira N."/>
            <person name="Kawashima T."/>
            <person name="Kojima M."/>
            <person name="Kondo S."/>
            <person name="Konno H."/>
            <person name="Nakano K."/>
            <person name="Ninomiya N."/>
            <person name="Nishio T."/>
            <person name="Okada M."/>
            <person name="Plessy C."/>
            <person name="Shibata K."/>
            <person name="Shiraki T."/>
            <person name="Suzuki S."/>
            <person name="Tagami M."/>
            <person name="Waki K."/>
            <person name="Watahiki A."/>
            <person name="Okamura-Oho Y."/>
            <person name="Suzuki H."/>
            <person name="Kawai J."/>
            <person name="Hayashizaki Y."/>
        </authorList>
    </citation>
    <scope>NUCLEOTIDE SEQUENCE [LARGE SCALE MRNA] OF 142-625</scope>
    <source>
        <strain>C57BL/6J</strain>
        <tissue>Embryo</tissue>
    </source>
</reference>
<reference key="4">
    <citation type="journal article" date="2009" name="Cell Motil. Cytoskeleton">
        <title>Characterization of mouse IFT complex B.</title>
        <authorList>
            <person name="Follit J.A."/>
            <person name="Xu F."/>
            <person name="Keady B.T."/>
            <person name="Pazour G.J."/>
        </authorList>
    </citation>
    <scope>IDENTIFICATION IN THE IFT COMPLEX B</scope>
    <scope>INTERACTION WITH IFT88</scope>
    <scope>SUBCELLULAR LOCATION</scope>
</reference>
<reference key="5">
    <citation type="journal article" date="2010" name="Cell">
        <title>A tissue-specific atlas of mouse protein phosphorylation and expression.</title>
        <authorList>
            <person name="Huttlin E.L."/>
            <person name="Jedrychowski M.P."/>
            <person name="Elias J.E."/>
            <person name="Goswami T."/>
            <person name="Rad R."/>
            <person name="Beausoleil S.A."/>
            <person name="Villen J."/>
            <person name="Haas W."/>
            <person name="Sowa M.E."/>
            <person name="Gygi S.P."/>
        </authorList>
    </citation>
    <scope>PHOSPHORYLATION [LARGE SCALE ANALYSIS] AT SER-316 AND SER-409</scope>
    <scope>IDENTIFICATION BY MASS SPECTROMETRY [LARGE SCALE ANALYSIS]</scope>
    <source>
        <tissue>Kidney</tissue>
        <tissue>Testis</tissue>
    </source>
</reference>
<reference key="6">
    <citation type="journal article" date="2011" name="Dev. Biol.">
        <title>Mutations in Traf3ip1 reveal defects in ciliogenesis, embryonic development, and altered cell size regulation.</title>
        <authorList>
            <person name="Berbari N.F."/>
            <person name="Kin N.W."/>
            <person name="Sharma N."/>
            <person name="Michaud E.J."/>
            <person name="Kesterson R.A."/>
            <person name="Yoder B.K."/>
        </authorList>
    </citation>
    <scope>FUNCTION</scope>
    <scope>DISRUPTION PHENOTYPE</scope>
    <scope>SUBCELLULAR LOCATION</scope>
</reference>
<reference key="7">
    <citation type="journal article" date="2015" name="Nat. Commun.">
        <title>Mutations in TRAF3IP1/IFT54 reveal a new role for IFT proteins in microtubule stabilization.</title>
        <authorList>
            <person name="Bizet A.A."/>
            <person name="Becker-Heck A."/>
            <person name="Ryan R."/>
            <person name="Weber K."/>
            <person name="Filhol E."/>
            <person name="Krug P."/>
            <person name="Halbritter J."/>
            <person name="Delous M."/>
            <person name="Lasbennes M.C."/>
            <person name="Linghu B."/>
            <person name="Oakeley E.J."/>
            <person name="Zarhrate M."/>
            <person name="Nitschke P."/>
            <person name="Garfa-Traore M."/>
            <person name="Serluca F."/>
            <person name="Yang F."/>
            <person name="Bouwmeester T."/>
            <person name="Pinson L."/>
            <person name="Cassuto E."/>
            <person name="Dubot P."/>
            <person name="Elshakhs N.A."/>
            <person name="Sahel J.A."/>
            <person name="Salomon R."/>
            <person name="Drummond I.A."/>
            <person name="Gubler M.C."/>
            <person name="Antignac C."/>
            <person name="Chibout S."/>
            <person name="Szustakowski J.D."/>
            <person name="Hildebrandt F."/>
            <person name="Lorentzen E."/>
            <person name="Sailer A.W."/>
            <person name="Benmerah A."/>
            <person name="Saint-Mezard P."/>
            <person name="Saunier S."/>
        </authorList>
    </citation>
    <scope>FUNCTION</scope>
    <scope>INTERACTION WITH MAP4</scope>
    <scope>MUTAGENESIS OF ILE-453</scope>
</reference>
<sequence>MNAAVVRRTQEALGKVIRRPPLTEKLLNKPPFRYLHDIITEVIRITGFMKGLYTDAEMKSENVKDKDAKISFLQKAIDVVMMVSGEPLAAKPARIVAGHEPERTNELLQLIGKCCLSKLSSDEAVKRVLAGDKGDSRGRAQRTSKAQEPNNKSGKEEESRIHKEDKRSSEAKERSASAEHKQKEELKEDSKPREKERDKEKAKEADRDRHRDPDRDRNRDGEREKARARAKDRDRNNRDRDREAERDRERDRRSEGGKEKERVKDRDRDRDKGRDRERRKSKNGEHTRDPDREKSRDADKPEKKSSSSGEISRKLSDGSFKDVKAEMEADISVGASRSSTLKPSKRRSKHSLEGDSPSDAEVEAGPAGQDKPEVMENAEVPSELPSSLRRIPRPGSARPAPPRVKRQESTETLVVDRSGSGKTVSSVIIDSQNSDNEDDEQFVVEAAPQLSEIADIDMVPSGELEDEEKHGGLVKKILETKKDYEKLQQSLKPGEKERSLIFESAWKKEKDIVSKEIEKLRVSIQTLCKSALPLGKIMDYIQEDVDAMQNELQLWHSENRQHAEALSQEQSITDSAVEPLKAELSELEQQIRDQQDKICAVKANILKNEEKIQKMVHSINLSSRR</sequence>
<feature type="chain" id="PRO_0000299545" description="TRAF3-interacting protein 1">
    <location>
        <begin position="1"/>
        <end position="625"/>
    </location>
</feature>
<feature type="region of interest" description="Abolishes microtubules binding when missing" evidence="1">
    <location>
        <begin position="1"/>
        <end position="322"/>
    </location>
</feature>
<feature type="region of interest" description="Disordered" evidence="4">
    <location>
        <begin position="130"/>
        <end position="439"/>
    </location>
</feature>
<feature type="region of interest" description="DISC1-interaction domain" evidence="1">
    <location>
        <begin position="229"/>
        <end position="625"/>
    </location>
</feature>
<feature type="coiled-coil region" evidence="3">
    <location>
        <begin position="472"/>
        <end position="600"/>
    </location>
</feature>
<feature type="compositionally biased region" description="Polar residues" evidence="4">
    <location>
        <begin position="141"/>
        <end position="152"/>
    </location>
</feature>
<feature type="compositionally biased region" description="Basic and acidic residues" evidence="4">
    <location>
        <begin position="153"/>
        <end position="327"/>
    </location>
</feature>
<feature type="compositionally biased region" description="Polar residues" evidence="4">
    <location>
        <begin position="420"/>
        <end position="434"/>
    </location>
</feature>
<feature type="modified residue" description="Phosphoserine" evidence="9">
    <location>
        <position position="316"/>
    </location>
</feature>
<feature type="modified residue" description="Phosphoserine" evidence="9">
    <location>
        <position position="409"/>
    </location>
</feature>
<feature type="mutagenesis site" description="Decreased interaction with MAP4. No effect on interaction with IFT20.">
    <original>I</original>
    <variation>R</variation>
    <location>
        <position position="453"/>
    </location>
</feature>
<feature type="sequence conflict" description="In Ref. 2; AAH46538." evidence="8" ref="2">
    <original>L</original>
    <variation>F</variation>
    <location>
        <position position="52"/>
    </location>
</feature>
<feature type="sequence conflict" description="In Ref. 2; AAI17869." evidence="8" ref="2">
    <original>R</original>
    <variation>K</variation>
    <location>
        <position position="313"/>
    </location>
</feature>
<feature type="sequence conflict" description="In Ref. 3; BAB29364." evidence="8" ref="3">
    <original>K</original>
    <variation>E</variation>
    <location>
        <position position="371"/>
    </location>
</feature>
<feature type="helix" evidence="10">
    <location>
        <begin position="3"/>
        <end position="14"/>
    </location>
</feature>
<feature type="helix" evidence="10">
    <location>
        <begin position="24"/>
        <end position="28"/>
    </location>
</feature>
<feature type="helix" evidence="10">
    <location>
        <begin position="32"/>
        <end position="46"/>
    </location>
</feature>
<feature type="turn" evidence="10">
    <location>
        <begin position="48"/>
        <end position="51"/>
    </location>
</feature>
<feature type="turn" evidence="10">
    <location>
        <begin position="55"/>
        <end position="58"/>
    </location>
</feature>
<feature type="helix" evidence="10">
    <location>
        <begin position="60"/>
        <end position="62"/>
    </location>
</feature>
<feature type="helix" evidence="10">
    <location>
        <begin position="66"/>
        <end position="84"/>
    </location>
</feature>
<feature type="helix" evidence="10">
    <location>
        <begin position="92"/>
        <end position="96"/>
    </location>
</feature>
<feature type="helix" evidence="10">
    <location>
        <begin position="101"/>
        <end position="116"/>
    </location>
</feature>
<feature type="helix" evidence="10">
    <location>
        <begin position="122"/>
        <end position="130"/>
    </location>
</feature>
<proteinExistence type="evidence at protein level"/>
<name>MIPT3_MOUSE</name>
<dbReference type="EMBL" id="AY613437">
    <property type="protein sequence ID" value="AAT72918.1"/>
    <property type="molecule type" value="mRNA"/>
</dbReference>
<dbReference type="EMBL" id="BC046538">
    <property type="protein sequence ID" value="AAH46538.1"/>
    <property type="status" value="ALT_SEQ"/>
    <property type="molecule type" value="mRNA"/>
</dbReference>
<dbReference type="EMBL" id="BC117868">
    <property type="protein sequence ID" value="AAI17869.1"/>
    <property type="molecule type" value="mRNA"/>
</dbReference>
<dbReference type="EMBL" id="AK014457">
    <property type="protein sequence ID" value="BAB29364.1"/>
    <property type="molecule type" value="mRNA"/>
</dbReference>
<dbReference type="CCDS" id="CCDS35664.1"/>
<dbReference type="RefSeq" id="NP_082994.1">
    <property type="nucleotide sequence ID" value="NM_028718.2"/>
</dbReference>
<dbReference type="PDB" id="5FMU">
    <property type="method" value="X-ray"/>
    <property type="resolution" value="1.59 A"/>
    <property type="chains" value="A/B/C/D=1-133"/>
</dbReference>
<dbReference type="PDBsum" id="5FMU"/>
<dbReference type="SMR" id="Q149C2"/>
<dbReference type="BioGRID" id="216428">
    <property type="interactions" value="1"/>
</dbReference>
<dbReference type="ComplexPortal" id="CPX-5028">
    <property type="entry name" value="Intraflagellar transport complex B"/>
</dbReference>
<dbReference type="FunCoup" id="Q149C2">
    <property type="interactions" value="490"/>
</dbReference>
<dbReference type="IntAct" id="Q149C2">
    <property type="interactions" value="1"/>
</dbReference>
<dbReference type="STRING" id="10090.ENSMUSP00000042391"/>
<dbReference type="iPTMnet" id="Q149C2"/>
<dbReference type="PhosphoSitePlus" id="Q149C2"/>
<dbReference type="jPOST" id="Q149C2"/>
<dbReference type="PaxDb" id="10090-ENSMUSP00000042391"/>
<dbReference type="PeptideAtlas" id="Q149C2"/>
<dbReference type="ProteomicsDB" id="252568"/>
<dbReference type="Pumba" id="Q149C2"/>
<dbReference type="Antibodypedia" id="34501">
    <property type="antibodies" value="221 antibodies from 28 providers"/>
</dbReference>
<dbReference type="Ensembl" id="ENSMUST00000047242.9">
    <property type="protein sequence ID" value="ENSMUSP00000042391.8"/>
    <property type="gene ID" value="ENSMUSG00000034292.14"/>
</dbReference>
<dbReference type="GeneID" id="74019"/>
<dbReference type="KEGG" id="mmu:74019"/>
<dbReference type="UCSC" id="uc007cax.2">
    <property type="organism name" value="mouse"/>
</dbReference>
<dbReference type="AGR" id="MGI:1921269"/>
<dbReference type="CTD" id="26146"/>
<dbReference type="MGI" id="MGI:1921269">
    <property type="gene designation" value="Traf3ip1"/>
</dbReference>
<dbReference type="VEuPathDB" id="HostDB:ENSMUSG00000034292"/>
<dbReference type="eggNOG" id="KOG3809">
    <property type="taxonomic scope" value="Eukaryota"/>
</dbReference>
<dbReference type="GeneTree" id="ENSGT00720000108822"/>
<dbReference type="InParanoid" id="Q149C2"/>
<dbReference type="OrthoDB" id="10258914at2759"/>
<dbReference type="PhylomeDB" id="Q149C2"/>
<dbReference type="TreeFam" id="TF315473"/>
<dbReference type="Reactome" id="R-MMU-5620924">
    <property type="pathway name" value="Intraflagellar transport"/>
</dbReference>
<dbReference type="BioGRID-ORCS" id="74019">
    <property type="hits" value="5 hits in 76 CRISPR screens"/>
</dbReference>
<dbReference type="ChiTaRS" id="Traf3ip1">
    <property type="organism name" value="mouse"/>
</dbReference>
<dbReference type="EvolutionaryTrace" id="Q149C2"/>
<dbReference type="PRO" id="PR:Q149C2"/>
<dbReference type="Proteomes" id="UP000000589">
    <property type="component" value="Chromosome 1"/>
</dbReference>
<dbReference type="RNAct" id="Q149C2">
    <property type="molecule type" value="protein"/>
</dbReference>
<dbReference type="Bgee" id="ENSMUSG00000034292">
    <property type="expression patterns" value="Expressed in olfactory epithelium and 222 other cell types or tissues"/>
</dbReference>
<dbReference type="ExpressionAtlas" id="Q149C2">
    <property type="expression patterns" value="baseline and differential"/>
</dbReference>
<dbReference type="GO" id="GO:0005930">
    <property type="term" value="C:axoneme"/>
    <property type="evidence" value="ECO:0000314"/>
    <property type="project" value="MGI"/>
</dbReference>
<dbReference type="GO" id="GO:0005813">
    <property type="term" value="C:centrosome"/>
    <property type="evidence" value="ECO:0000314"/>
    <property type="project" value="MGI"/>
</dbReference>
<dbReference type="GO" id="GO:0036064">
    <property type="term" value="C:ciliary basal body"/>
    <property type="evidence" value="ECO:0000314"/>
    <property type="project" value="MGI"/>
</dbReference>
<dbReference type="GO" id="GO:0097546">
    <property type="term" value="C:ciliary base"/>
    <property type="evidence" value="ECO:0000250"/>
    <property type="project" value="UniProtKB"/>
</dbReference>
<dbReference type="GO" id="GO:0097542">
    <property type="term" value="C:ciliary tip"/>
    <property type="evidence" value="ECO:0000250"/>
    <property type="project" value="UniProtKB"/>
</dbReference>
<dbReference type="GO" id="GO:0035869">
    <property type="term" value="C:ciliary transition zone"/>
    <property type="evidence" value="ECO:0000250"/>
    <property type="project" value="UniProtKB"/>
</dbReference>
<dbReference type="GO" id="GO:0005929">
    <property type="term" value="C:cilium"/>
    <property type="evidence" value="ECO:0000314"/>
    <property type="project" value="MGI"/>
</dbReference>
<dbReference type="GO" id="GO:0005829">
    <property type="term" value="C:cytosol"/>
    <property type="evidence" value="ECO:0000266"/>
    <property type="project" value="MGI"/>
</dbReference>
<dbReference type="GO" id="GO:0001650">
    <property type="term" value="C:fibrillar center"/>
    <property type="evidence" value="ECO:0007669"/>
    <property type="project" value="Ensembl"/>
</dbReference>
<dbReference type="GO" id="GO:0030992">
    <property type="term" value="C:intraciliary transport particle B"/>
    <property type="evidence" value="ECO:0000314"/>
    <property type="project" value="UniProtKB"/>
</dbReference>
<dbReference type="GO" id="GO:0015630">
    <property type="term" value="C:microtubule cytoskeleton"/>
    <property type="evidence" value="ECO:0000266"/>
    <property type="project" value="MGI"/>
</dbReference>
<dbReference type="GO" id="GO:0016604">
    <property type="term" value="C:nuclear body"/>
    <property type="evidence" value="ECO:0007669"/>
    <property type="project" value="Ensembl"/>
</dbReference>
<dbReference type="GO" id="GO:0008017">
    <property type="term" value="F:microtubule binding"/>
    <property type="evidence" value="ECO:0000266"/>
    <property type="project" value="MGI"/>
</dbReference>
<dbReference type="GO" id="GO:0005102">
    <property type="term" value="F:signaling receptor binding"/>
    <property type="evidence" value="ECO:0000266"/>
    <property type="project" value="MGI"/>
</dbReference>
<dbReference type="GO" id="GO:0015631">
    <property type="term" value="F:tubulin binding"/>
    <property type="evidence" value="ECO:0000266"/>
    <property type="project" value="MGI"/>
</dbReference>
<dbReference type="GO" id="GO:0060271">
    <property type="term" value="P:cilium assembly"/>
    <property type="evidence" value="ECO:0000315"/>
    <property type="project" value="MGI"/>
</dbReference>
<dbReference type="GO" id="GO:0051607">
    <property type="term" value="P:defense response to virus"/>
    <property type="evidence" value="ECO:0000315"/>
    <property type="project" value="MGI"/>
</dbReference>
<dbReference type="GO" id="GO:0031076">
    <property type="term" value="P:embryonic camera-type eye development"/>
    <property type="evidence" value="ECO:0000315"/>
    <property type="project" value="MGI"/>
</dbReference>
<dbReference type="GO" id="GO:0042733">
    <property type="term" value="P:embryonic digit morphogenesis"/>
    <property type="evidence" value="ECO:0000315"/>
    <property type="project" value="MGI"/>
</dbReference>
<dbReference type="GO" id="GO:0035050">
    <property type="term" value="P:embryonic heart tube development"/>
    <property type="evidence" value="ECO:0000315"/>
    <property type="project" value="MGI"/>
</dbReference>
<dbReference type="GO" id="GO:0035720">
    <property type="term" value="P:intraciliary anterograde transport"/>
    <property type="evidence" value="ECO:0000303"/>
    <property type="project" value="ComplexPortal"/>
</dbReference>
<dbReference type="GO" id="GO:0042073">
    <property type="term" value="P:intraciliary transport"/>
    <property type="evidence" value="ECO:0000305"/>
    <property type="project" value="MGI"/>
</dbReference>
<dbReference type="GO" id="GO:0001822">
    <property type="term" value="P:kidney development"/>
    <property type="evidence" value="ECO:0000250"/>
    <property type="project" value="UniProtKB"/>
</dbReference>
<dbReference type="GO" id="GO:0001738">
    <property type="term" value="P:morphogenesis of a polarized epithelium"/>
    <property type="evidence" value="ECO:0000315"/>
    <property type="project" value="UniProtKB"/>
</dbReference>
<dbReference type="GO" id="GO:0050687">
    <property type="term" value="P:negative regulation of defense response to virus"/>
    <property type="evidence" value="ECO:0000315"/>
    <property type="project" value="CACAO"/>
</dbReference>
<dbReference type="GO" id="GO:0032688">
    <property type="term" value="P:negative regulation of interferon-beta production"/>
    <property type="evidence" value="ECO:0000315"/>
    <property type="project" value="MGI"/>
</dbReference>
<dbReference type="GO" id="GO:0031333">
    <property type="term" value="P:negative regulation of protein-containing complex assembly"/>
    <property type="evidence" value="ECO:0007669"/>
    <property type="project" value="Ensembl"/>
</dbReference>
<dbReference type="GO" id="GO:0045879">
    <property type="term" value="P:negative regulation of smoothened signaling pathway"/>
    <property type="evidence" value="ECO:0000315"/>
    <property type="project" value="MGI"/>
</dbReference>
<dbReference type="GO" id="GO:0000122">
    <property type="term" value="P:negative regulation of transcription by RNA polymerase II"/>
    <property type="evidence" value="ECO:0000266"/>
    <property type="project" value="MGI"/>
</dbReference>
<dbReference type="GO" id="GO:0021532">
    <property type="term" value="P:neural tube patterning"/>
    <property type="evidence" value="ECO:0000315"/>
    <property type="project" value="MGI"/>
</dbReference>
<dbReference type="GO" id="GO:0036342">
    <property type="term" value="P:post-anal tail morphogenesis"/>
    <property type="evidence" value="ECO:0000315"/>
    <property type="project" value="MGI"/>
</dbReference>
<dbReference type="GO" id="GO:0070507">
    <property type="term" value="P:regulation of microtubule cytoskeleton organization"/>
    <property type="evidence" value="ECO:0000315"/>
    <property type="project" value="UniProtKB"/>
</dbReference>
<dbReference type="FunFam" id="1.10.418.50:FF:000001">
    <property type="entry name" value="TRAF3-interacting protein 1 isoform X1"/>
    <property type="match status" value="1"/>
</dbReference>
<dbReference type="Gene3D" id="1.10.418.50">
    <property type="entry name" value="Microtubule-binding protein MIP-T3"/>
    <property type="match status" value="1"/>
</dbReference>
<dbReference type="InterPro" id="IPR018799">
    <property type="entry name" value="TRAF3IP1"/>
</dbReference>
<dbReference type="InterPro" id="IPR041476">
    <property type="entry name" value="TRAF3IP1_C"/>
</dbReference>
<dbReference type="InterPro" id="IPR040468">
    <property type="entry name" value="TRAF3IP1_N"/>
</dbReference>
<dbReference type="InterPro" id="IPR042576">
    <property type="entry name" value="TRAF3IP1_N_sf"/>
</dbReference>
<dbReference type="PANTHER" id="PTHR31363">
    <property type="entry name" value="TRAF3-INTERACTING PROTEIN 1"/>
    <property type="match status" value="1"/>
</dbReference>
<dbReference type="PANTHER" id="PTHR31363:SF0">
    <property type="entry name" value="TRAF3-INTERACTING PROTEIN 1"/>
    <property type="match status" value="1"/>
</dbReference>
<dbReference type="Pfam" id="PF10243">
    <property type="entry name" value="MIP-T3"/>
    <property type="match status" value="1"/>
</dbReference>
<dbReference type="Pfam" id="PF17749">
    <property type="entry name" value="MIP-T3_C"/>
    <property type="match status" value="1"/>
</dbReference>
<accession>Q149C2</accession>
<accession>Q538H5</accession>
<accession>Q80VQ3</accession>
<accession>Q9CS98</accession>
<gene>
    <name type="primary">Traf3ip1</name>
    <name type="synonym">Ift54</name>
    <name type="synonym">Mipt3</name>
</gene>
<keyword id="KW-0002">3D-structure</keyword>
<keyword id="KW-0966">Cell projection</keyword>
<keyword id="KW-0969">Cilium</keyword>
<keyword id="KW-0970">Cilium biogenesis/degradation</keyword>
<keyword id="KW-0175">Coiled coil</keyword>
<keyword id="KW-0963">Cytoplasm</keyword>
<keyword id="KW-0206">Cytoskeleton</keyword>
<keyword id="KW-0597">Phosphoprotein</keyword>
<keyword id="KW-1185">Reference proteome</keyword>